<geneLocation type="chloroplast"/>
<dbReference type="EC" id="3.4.21.92" evidence="1"/>
<dbReference type="EMBL" id="AP009370">
    <property type="protein sequence ID" value="BAF50135.1"/>
    <property type="molecule type" value="Genomic_DNA"/>
</dbReference>
<dbReference type="RefSeq" id="YP_001123311.1">
    <property type="nucleotide sequence ID" value="NC_009269.1"/>
</dbReference>
<dbReference type="SMR" id="A4QKD0"/>
<dbReference type="MEROPS" id="S14.002"/>
<dbReference type="GeneID" id="4961823"/>
<dbReference type="GO" id="GO:0009570">
    <property type="term" value="C:chloroplast stroma"/>
    <property type="evidence" value="ECO:0007669"/>
    <property type="project" value="UniProtKB-SubCell"/>
</dbReference>
<dbReference type="GO" id="GO:0009368">
    <property type="term" value="C:endopeptidase Clp complex"/>
    <property type="evidence" value="ECO:0007669"/>
    <property type="project" value="TreeGrafter"/>
</dbReference>
<dbReference type="GO" id="GO:0004176">
    <property type="term" value="F:ATP-dependent peptidase activity"/>
    <property type="evidence" value="ECO:0007669"/>
    <property type="project" value="InterPro"/>
</dbReference>
<dbReference type="GO" id="GO:0051117">
    <property type="term" value="F:ATPase binding"/>
    <property type="evidence" value="ECO:0007669"/>
    <property type="project" value="TreeGrafter"/>
</dbReference>
<dbReference type="GO" id="GO:0004252">
    <property type="term" value="F:serine-type endopeptidase activity"/>
    <property type="evidence" value="ECO:0007669"/>
    <property type="project" value="UniProtKB-UniRule"/>
</dbReference>
<dbReference type="GO" id="GO:0006515">
    <property type="term" value="P:protein quality control for misfolded or incompletely synthesized proteins"/>
    <property type="evidence" value="ECO:0007669"/>
    <property type="project" value="TreeGrafter"/>
</dbReference>
<dbReference type="CDD" id="cd07017">
    <property type="entry name" value="S14_ClpP_2"/>
    <property type="match status" value="1"/>
</dbReference>
<dbReference type="FunFam" id="3.90.226.10:FF:000006">
    <property type="entry name" value="ATP-dependent Clp protease proteolytic subunit"/>
    <property type="match status" value="1"/>
</dbReference>
<dbReference type="Gene3D" id="3.90.226.10">
    <property type="entry name" value="2-enoyl-CoA Hydratase, Chain A, domain 1"/>
    <property type="match status" value="1"/>
</dbReference>
<dbReference type="HAMAP" id="MF_00444">
    <property type="entry name" value="ClpP"/>
    <property type="match status" value="1"/>
</dbReference>
<dbReference type="InterPro" id="IPR001907">
    <property type="entry name" value="ClpP"/>
</dbReference>
<dbReference type="InterPro" id="IPR029045">
    <property type="entry name" value="ClpP/crotonase-like_dom_sf"/>
</dbReference>
<dbReference type="InterPro" id="IPR023562">
    <property type="entry name" value="ClpP/TepA"/>
</dbReference>
<dbReference type="InterPro" id="IPR033135">
    <property type="entry name" value="ClpP_His_AS"/>
</dbReference>
<dbReference type="PANTHER" id="PTHR10381">
    <property type="entry name" value="ATP-DEPENDENT CLP PROTEASE PROTEOLYTIC SUBUNIT"/>
    <property type="match status" value="1"/>
</dbReference>
<dbReference type="PANTHER" id="PTHR10381:SF15">
    <property type="entry name" value="CHLOROPLASTIC ATP-DEPENDENT CLP PROTEASE PROTEOLYTIC SUBUNIT 1"/>
    <property type="match status" value="1"/>
</dbReference>
<dbReference type="Pfam" id="PF00574">
    <property type="entry name" value="CLP_protease"/>
    <property type="match status" value="1"/>
</dbReference>
<dbReference type="PRINTS" id="PR00127">
    <property type="entry name" value="CLPPROTEASEP"/>
</dbReference>
<dbReference type="SUPFAM" id="SSF52096">
    <property type="entry name" value="ClpP/crotonase"/>
    <property type="match status" value="1"/>
</dbReference>
<dbReference type="PROSITE" id="PS00382">
    <property type="entry name" value="CLP_PROTEASE_HIS"/>
    <property type="match status" value="1"/>
</dbReference>
<evidence type="ECO:0000255" key="1">
    <source>
        <dbReference type="HAMAP-Rule" id="MF_00444"/>
    </source>
</evidence>
<accession>A4QKD0</accession>
<reference key="1">
    <citation type="submission" date="2007-03" db="EMBL/GenBank/DDBJ databases">
        <title>Sequencing analysis of Barbarea verna chloroplast DNA.</title>
        <authorList>
            <person name="Hosouchi T."/>
            <person name="Tsuruoka H."/>
            <person name="Kotani H."/>
        </authorList>
    </citation>
    <scope>NUCLEOTIDE SEQUENCE [LARGE SCALE GENOMIC DNA]</scope>
</reference>
<protein>
    <recommendedName>
        <fullName evidence="1">ATP-dependent Clp protease proteolytic subunit</fullName>
        <ecNumber evidence="1">3.4.21.92</ecNumber>
    </recommendedName>
    <alternativeName>
        <fullName evidence="1">Endopeptidase Clp</fullName>
    </alternativeName>
</protein>
<keyword id="KW-0150">Chloroplast</keyword>
<keyword id="KW-0378">Hydrolase</keyword>
<keyword id="KW-0934">Plastid</keyword>
<keyword id="KW-0645">Protease</keyword>
<keyword id="KW-0720">Serine protease</keyword>
<comment type="function">
    <text evidence="1">Cleaves peptides in various proteins in a process that requires ATP hydrolysis. Has a chymotrypsin-like activity. Plays a major role in the degradation of misfolded proteins.</text>
</comment>
<comment type="catalytic activity">
    <reaction evidence="1">
        <text>Hydrolysis of proteins to small peptides in the presence of ATP and magnesium. alpha-casein is the usual test substrate. In the absence of ATP, only oligopeptides shorter than five residues are hydrolyzed (such as succinyl-Leu-Tyr-|-NHMec, and Leu-Tyr-Leu-|-Tyr-Trp, in which cleavage of the -Tyr-|-Leu- and -Tyr-|-Trp bonds also occurs).</text>
        <dbReference type="EC" id="3.4.21.92"/>
    </reaction>
</comment>
<comment type="subunit">
    <text>Component of the chloroplastic Clp protease core complex.</text>
</comment>
<comment type="subcellular location">
    <subcellularLocation>
        <location evidence="1">Plastid</location>
        <location evidence="1">Chloroplast stroma</location>
    </subcellularLocation>
</comment>
<comment type="similarity">
    <text evidence="1">Belongs to the peptidase S14 family.</text>
</comment>
<organism>
    <name type="scientific">Barbarea verna</name>
    <name type="common">Land cress</name>
    <name type="synonym">Erysimum vernum</name>
    <dbReference type="NCBI Taxonomy" id="50458"/>
    <lineage>
        <taxon>Eukaryota</taxon>
        <taxon>Viridiplantae</taxon>
        <taxon>Streptophyta</taxon>
        <taxon>Embryophyta</taxon>
        <taxon>Tracheophyta</taxon>
        <taxon>Spermatophyta</taxon>
        <taxon>Magnoliopsida</taxon>
        <taxon>eudicotyledons</taxon>
        <taxon>Gunneridae</taxon>
        <taxon>Pentapetalae</taxon>
        <taxon>rosids</taxon>
        <taxon>malvids</taxon>
        <taxon>Brassicales</taxon>
        <taxon>Brassicaceae</taxon>
        <taxon>Cardamineae</taxon>
        <taxon>Barbarea</taxon>
    </lineage>
</organism>
<proteinExistence type="inferred from homology"/>
<sequence>MPIGVPKVPFRSPGEGDTSWVDIYNRLYRERLFFLGQEVDTEISNQLISLMIYLSIEKDTKDLYLFINSPGGWVISGMAIYDTMQFVRPDVQTICMGLAASIASFILVGGAITKRIAFPHARVMIHQPASSFYEAQTGEFILEAEELLKLRETITRVYVQRTGKPIWVVSEDMERDVFMSATEAQAHGIVDLVAVQ</sequence>
<feature type="chain" id="PRO_0000309290" description="ATP-dependent Clp protease proteolytic subunit">
    <location>
        <begin position="1"/>
        <end position="196"/>
    </location>
</feature>
<feature type="active site" description="Nucleophile" evidence="1">
    <location>
        <position position="101"/>
    </location>
</feature>
<feature type="active site" evidence="1">
    <location>
        <position position="126"/>
    </location>
</feature>
<name>CLPP_BARVE</name>
<gene>
    <name evidence="1" type="primary">clpP</name>
</gene>